<accession>A0KWW5</accession>
<proteinExistence type="inferred from homology"/>
<keyword id="KW-0030">Aminoacyl-tRNA synthetase</keyword>
<keyword id="KW-0067">ATP-binding</keyword>
<keyword id="KW-0963">Cytoplasm</keyword>
<keyword id="KW-0436">Ligase</keyword>
<keyword id="KW-0547">Nucleotide-binding</keyword>
<keyword id="KW-0648">Protein biosynthesis</keyword>
<reference key="1">
    <citation type="submission" date="2006-09" db="EMBL/GenBank/DDBJ databases">
        <title>Complete sequence of chromosome 1 of Shewanella sp. ANA-3.</title>
        <authorList>
            <person name="Copeland A."/>
            <person name="Lucas S."/>
            <person name="Lapidus A."/>
            <person name="Barry K."/>
            <person name="Detter J.C."/>
            <person name="Glavina del Rio T."/>
            <person name="Hammon N."/>
            <person name="Israni S."/>
            <person name="Dalin E."/>
            <person name="Tice H."/>
            <person name="Pitluck S."/>
            <person name="Chertkov O."/>
            <person name="Brettin T."/>
            <person name="Bruce D."/>
            <person name="Han C."/>
            <person name="Tapia R."/>
            <person name="Gilna P."/>
            <person name="Schmutz J."/>
            <person name="Larimer F."/>
            <person name="Land M."/>
            <person name="Hauser L."/>
            <person name="Kyrpides N."/>
            <person name="Kim E."/>
            <person name="Newman D."/>
            <person name="Salticov C."/>
            <person name="Konstantinidis K."/>
            <person name="Klappenback J."/>
            <person name="Tiedje J."/>
            <person name="Richardson P."/>
        </authorList>
    </citation>
    <scope>NUCLEOTIDE SEQUENCE [LARGE SCALE GENOMIC DNA]</scope>
    <source>
        <strain>ANA-3</strain>
    </source>
</reference>
<evidence type="ECO:0000255" key="1">
    <source>
        <dbReference type="HAMAP-Rule" id="MF_00176"/>
    </source>
</evidence>
<feature type="chain" id="PRO_1000019815" description="Serine--tRNA ligase">
    <location>
        <begin position="1"/>
        <end position="428"/>
    </location>
</feature>
<feature type="binding site" evidence="1">
    <location>
        <begin position="235"/>
        <end position="237"/>
    </location>
    <ligand>
        <name>L-serine</name>
        <dbReference type="ChEBI" id="CHEBI:33384"/>
    </ligand>
</feature>
<feature type="binding site" evidence="1">
    <location>
        <begin position="266"/>
        <end position="268"/>
    </location>
    <ligand>
        <name>ATP</name>
        <dbReference type="ChEBI" id="CHEBI:30616"/>
    </ligand>
</feature>
<feature type="binding site" evidence="1">
    <location>
        <position position="289"/>
    </location>
    <ligand>
        <name>L-serine</name>
        <dbReference type="ChEBI" id="CHEBI:33384"/>
    </ligand>
</feature>
<feature type="binding site" evidence="1">
    <location>
        <begin position="353"/>
        <end position="356"/>
    </location>
    <ligand>
        <name>ATP</name>
        <dbReference type="ChEBI" id="CHEBI:30616"/>
    </ligand>
</feature>
<feature type="binding site" evidence="1">
    <location>
        <position position="389"/>
    </location>
    <ligand>
        <name>L-serine</name>
        <dbReference type="ChEBI" id="CHEBI:33384"/>
    </ligand>
</feature>
<organism>
    <name type="scientific">Shewanella sp. (strain ANA-3)</name>
    <dbReference type="NCBI Taxonomy" id="94122"/>
    <lineage>
        <taxon>Bacteria</taxon>
        <taxon>Pseudomonadati</taxon>
        <taxon>Pseudomonadota</taxon>
        <taxon>Gammaproteobacteria</taxon>
        <taxon>Alteromonadales</taxon>
        <taxon>Shewanellaceae</taxon>
        <taxon>Shewanella</taxon>
    </lineage>
</organism>
<protein>
    <recommendedName>
        <fullName evidence="1">Serine--tRNA ligase</fullName>
        <ecNumber evidence="1">6.1.1.11</ecNumber>
    </recommendedName>
    <alternativeName>
        <fullName evidence="1">Seryl-tRNA synthetase</fullName>
        <shortName evidence="1">SerRS</shortName>
    </alternativeName>
    <alternativeName>
        <fullName evidence="1">Seryl-tRNA(Ser/Sec) synthetase</fullName>
    </alternativeName>
</protein>
<gene>
    <name evidence="1" type="primary">serS</name>
    <name type="ordered locus">Shewana3_2054</name>
</gene>
<sequence length="428" mass="46869">MLDPKFLRNELAVTAERLATRGFILDVAHLTQLEEKRKSLQVATEELQASRNAISKSIGQAKARGEDVDAIMAQVGDLGAQLDAKKVELAAVLEEVNAIAMSMPNLPDESAPIGADETENVEIRRWGTPRSFDFPVKDHIDLGEGLNGLDFKSAVKITGSRFIVMKGQIARLNRALGQFMLDLHTTEHGYTEAYVPLLVNEASLLGTGQLPKFGEDLFHTKPATEEGQGLSLIPTAEVPLTNLVRDSIVDEDELPIKLTAHTACFRSEAGSYGKDTRGLIRQHQFDKVELVQLVKPEDSMAALEALTGHAETVLQRLGLPYRTVILCTGDMGFGSSKTYDIEVWLPGQNTYREISSCSNMKDFQARRMQARYRVKADNKPALLHTLNGSGLAVGRTLVAILENYQNADGSVTIPEALRPYMGGLTQIG</sequence>
<dbReference type="EC" id="6.1.1.11" evidence="1"/>
<dbReference type="EMBL" id="CP000469">
    <property type="protein sequence ID" value="ABK48284.1"/>
    <property type="molecule type" value="Genomic_DNA"/>
</dbReference>
<dbReference type="RefSeq" id="WP_011622733.1">
    <property type="nucleotide sequence ID" value="NC_008577.1"/>
</dbReference>
<dbReference type="SMR" id="A0KWW5"/>
<dbReference type="STRING" id="94122.Shewana3_2054"/>
<dbReference type="KEGG" id="shn:Shewana3_2054"/>
<dbReference type="eggNOG" id="COG0172">
    <property type="taxonomic scope" value="Bacteria"/>
</dbReference>
<dbReference type="HOGENOM" id="CLU_023797_1_1_6"/>
<dbReference type="OrthoDB" id="9804647at2"/>
<dbReference type="UniPathway" id="UPA00906">
    <property type="reaction ID" value="UER00895"/>
</dbReference>
<dbReference type="Proteomes" id="UP000002589">
    <property type="component" value="Chromosome"/>
</dbReference>
<dbReference type="GO" id="GO:0005737">
    <property type="term" value="C:cytoplasm"/>
    <property type="evidence" value="ECO:0007669"/>
    <property type="project" value="UniProtKB-SubCell"/>
</dbReference>
<dbReference type="GO" id="GO:0005524">
    <property type="term" value="F:ATP binding"/>
    <property type="evidence" value="ECO:0007669"/>
    <property type="project" value="UniProtKB-UniRule"/>
</dbReference>
<dbReference type="GO" id="GO:0004828">
    <property type="term" value="F:serine-tRNA ligase activity"/>
    <property type="evidence" value="ECO:0007669"/>
    <property type="project" value="UniProtKB-UniRule"/>
</dbReference>
<dbReference type="GO" id="GO:0016260">
    <property type="term" value="P:selenocysteine biosynthetic process"/>
    <property type="evidence" value="ECO:0007669"/>
    <property type="project" value="UniProtKB-UniRule"/>
</dbReference>
<dbReference type="GO" id="GO:0006434">
    <property type="term" value="P:seryl-tRNA aminoacylation"/>
    <property type="evidence" value="ECO:0007669"/>
    <property type="project" value="UniProtKB-UniRule"/>
</dbReference>
<dbReference type="CDD" id="cd00770">
    <property type="entry name" value="SerRS_core"/>
    <property type="match status" value="1"/>
</dbReference>
<dbReference type="Gene3D" id="3.30.930.10">
    <property type="entry name" value="Bira Bifunctional Protein, Domain 2"/>
    <property type="match status" value="1"/>
</dbReference>
<dbReference type="Gene3D" id="1.10.287.40">
    <property type="entry name" value="Serine-tRNA synthetase, tRNA binding domain"/>
    <property type="match status" value="1"/>
</dbReference>
<dbReference type="HAMAP" id="MF_00176">
    <property type="entry name" value="Ser_tRNA_synth_type1"/>
    <property type="match status" value="1"/>
</dbReference>
<dbReference type="InterPro" id="IPR002314">
    <property type="entry name" value="aa-tRNA-synt_IIb"/>
</dbReference>
<dbReference type="InterPro" id="IPR006195">
    <property type="entry name" value="aa-tRNA-synth_II"/>
</dbReference>
<dbReference type="InterPro" id="IPR045864">
    <property type="entry name" value="aa-tRNA-synth_II/BPL/LPL"/>
</dbReference>
<dbReference type="InterPro" id="IPR002317">
    <property type="entry name" value="Ser-tRNA-ligase_type_1"/>
</dbReference>
<dbReference type="InterPro" id="IPR015866">
    <property type="entry name" value="Ser-tRNA-synth_1_N"/>
</dbReference>
<dbReference type="InterPro" id="IPR042103">
    <property type="entry name" value="SerRS_1_N_sf"/>
</dbReference>
<dbReference type="InterPro" id="IPR033729">
    <property type="entry name" value="SerRS_core"/>
</dbReference>
<dbReference type="InterPro" id="IPR010978">
    <property type="entry name" value="tRNA-bd_arm"/>
</dbReference>
<dbReference type="NCBIfam" id="TIGR00414">
    <property type="entry name" value="serS"/>
    <property type="match status" value="1"/>
</dbReference>
<dbReference type="PANTHER" id="PTHR43697:SF1">
    <property type="entry name" value="SERINE--TRNA LIGASE"/>
    <property type="match status" value="1"/>
</dbReference>
<dbReference type="PANTHER" id="PTHR43697">
    <property type="entry name" value="SERYL-TRNA SYNTHETASE"/>
    <property type="match status" value="1"/>
</dbReference>
<dbReference type="Pfam" id="PF02403">
    <property type="entry name" value="Seryl_tRNA_N"/>
    <property type="match status" value="1"/>
</dbReference>
<dbReference type="Pfam" id="PF00587">
    <property type="entry name" value="tRNA-synt_2b"/>
    <property type="match status" value="1"/>
</dbReference>
<dbReference type="PIRSF" id="PIRSF001529">
    <property type="entry name" value="Ser-tRNA-synth_IIa"/>
    <property type="match status" value="1"/>
</dbReference>
<dbReference type="PRINTS" id="PR00981">
    <property type="entry name" value="TRNASYNTHSER"/>
</dbReference>
<dbReference type="SUPFAM" id="SSF55681">
    <property type="entry name" value="Class II aaRS and biotin synthetases"/>
    <property type="match status" value="1"/>
</dbReference>
<dbReference type="SUPFAM" id="SSF46589">
    <property type="entry name" value="tRNA-binding arm"/>
    <property type="match status" value="1"/>
</dbReference>
<dbReference type="PROSITE" id="PS50862">
    <property type="entry name" value="AA_TRNA_LIGASE_II"/>
    <property type="match status" value="1"/>
</dbReference>
<comment type="function">
    <text evidence="1">Catalyzes the attachment of serine to tRNA(Ser). Is also able to aminoacylate tRNA(Sec) with serine, to form the misacylated tRNA L-seryl-tRNA(Sec), which will be further converted into selenocysteinyl-tRNA(Sec).</text>
</comment>
<comment type="catalytic activity">
    <reaction evidence="1">
        <text>tRNA(Ser) + L-serine + ATP = L-seryl-tRNA(Ser) + AMP + diphosphate + H(+)</text>
        <dbReference type="Rhea" id="RHEA:12292"/>
        <dbReference type="Rhea" id="RHEA-COMP:9669"/>
        <dbReference type="Rhea" id="RHEA-COMP:9703"/>
        <dbReference type="ChEBI" id="CHEBI:15378"/>
        <dbReference type="ChEBI" id="CHEBI:30616"/>
        <dbReference type="ChEBI" id="CHEBI:33019"/>
        <dbReference type="ChEBI" id="CHEBI:33384"/>
        <dbReference type="ChEBI" id="CHEBI:78442"/>
        <dbReference type="ChEBI" id="CHEBI:78533"/>
        <dbReference type="ChEBI" id="CHEBI:456215"/>
        <dbReference type="EC" id="6.1.1.11"/>
    </reaction>
</comment>
<comment type="catalytic activity">
    <reaction evidence="1">
        <text>tRNA(Sec) + L-serine + ATP = L-seryl-tRNA(Sec) + AMP + diphosphate + H(+)</text>
        <dbReference type="Rhea" id="RHEA:42580"/>
        <dbReference type="Rhea" id="RHEA-COMP:9742"/>
        <dbReference type="Rhea" id="RHEA-COMP:10128"/>
        <dbReference type="ChEBI" id="CHEBI:15378"/>
        <dbReference type="ChEBI" id="CHEBI:30616"/>
        <dbReference type="ChEBI" id="CHEBI:33019"/>
        <dbReference type="ChEBI" id="CHEBI:33384"/>
        <dbReference type="ChEBI" id="CHEBI:78442"/>
        <dbReference type="ChEBI" id="CHEBI:78533"/>
        <dbReference type="ChEBI" id="CHEBI:456215"/>
        <dbReference type="EC" id="6.1.1.11"/>
    </reaction>
</comment>
<comment type="pathway">
    <text evidence="1">Aminoacyl-tRNA biosynthesis; selenocysteinyl-tRNA(Sec) biosynthesis; L-seryl-tRNA(Sec) from L-serine and tRNA(Sec): step 1/1.</text>
</comment>
<comment type="subunit">
    <text evidence="1">Homodimer. The tRNA molecule binds across the dimer.</text>
</comment>
<comment type="subcellular location">
    <subcellularLocation>
        <location evidence="1">Cytoplasm</location>
    </subcellularLocation>
</comment>
<comment type="domain">
    <text evidence="1">Consists of two distinct domains, a catalytic core and a N-terminal extension that is involved in tRNA binding.</text>
</comment>
<comment type="similarity">
    <text evidence="1">Belongs to the class-II aminoacyl-tRNA synthetase family. Type-1 seryl-tRNA synthetase subfamily.</text>
</comment>
<name>SYS_SHESA</name>